<sequence length="182" mass="19796">MSHRLLFVGPPGAGKGTQAERLAANHGLLHLSTGDLLRAEVKAGSELGKEAEAVMNRGELVSDALVLAIVRSRLQSHSGGWLLDGFPRNLAQAEALDALLSELNQPLQSVLLMELDDDELVQRLLARGRADDNEEVIRHRLSVYREQTAPLINHYEQRGQLKRVVSTGTIEAVAEQITAALA</sequence>
<dbReference type="EC" id="2.7.4.3" evidence="1"/>
<dbReference type="EMBL" id="CT978603">
    <property type="protein sequence ID" value="CAK29038.1"/>
    <property type="molecule type" value="Genomic_DNA"/>
</dbReference>
<dbReference type="SMR" id="A5GVX9"/>
<dbReference type="STRING" id="316278.SynRCC307_2135"/>
<dbReference type="KEGG" id="syr:SynRCC307_2135"/>
<dbReference type="eggNOG" id="COG0563">
    <property type="taxonomic scope" value="Bacteria"/>
</dbReference>
<dbReference type="HOGENOM" id="CLU_032354_4_1_3"/>
<dbReference type="OrthoDB" id="9805030at2"/>
<dbReference type="UniPathway" id="UPA00588">
    <property type="reaction ID" value="UER00649"/>
</dbReference>
<dbReference type="Proteomes" id="UP000001115">
    <property type="component" value="Chromosome"/>
</dbReference>
<dbReference type="GO" id="GO:0005737">
    <property type="term" value="C:cytoplasm"/>
    <property type="evidence" value="ECO:0007669"/>
    <property type="project" value="UniProtKB-SubCell"/>
</dbReference>
<dbReference type="GO" id="GO:0004017">
    <property type="term" value="F:adenylate kinase activity"/>
    <property type="evidence" value="ECO:0007669"/>
    <property type="project" value="UniProtKB-UniRule"/>
</dbReference>
<dbReference type="GO" id="GO:0005524">
    <property type="term" value="F:ATP binding"/>
    <property type="evidence" value="ECO:0007669"/>
    <property type="project" value="UniProtKB-UniRule"/>
</dbReference>
<dbReference type="GO" id="GO:0044209">
    <property type="term" value="P:AMP salvage"/>
    <property type="evidence" value="ECO:0007669"/>
    <property type="project" value="UniProtKB-UniRule"/>
</dbReference>
<dbReference type="CDD" id="cd01428">
    <property type="entry name" value="ADK"/>
    <property type="match status" value="1"/>
</dbReference>
<dbReference type="Gene3D" id="3.40.50.300">
    <property type="entry name" value="P-loop containing nucleotide triphosphate hydrolases"/>
    <property type="match status" value="1"/>
</dbReference>
<dbReference type="HAMAP" id="MF_00235">
    <property type="entry name" value="Adenylate_kinase_Adk"/>
    <property type="match status" value="1"/>
</dbReference>
<dbReference type="InterPro" id="IPR000850">
    <property type="entry name" value="Adenylat/UMP-CMP_kin"/>
</dbReference>
<dbReference type="InterPro" id="IPR033690">
    <property type="entry name" value="Adenylat_kinase_CS"/>
</dbReference>
<dbReference type="InterPro" id="IPR027417">
    <property type="entry name" value="P-loop_NTPase"/>
</dbReference>
<dbReference type="NCBIfam" id="NF001381">
    <property type="entry name" value="PRK00279.1-3"/>
    <property type="match status" value="1"/>
</dbReference>
<dbReference type="NCBIfam" id="NF011100">
    <property type="entry name" value="PRK14527.1"/>
    <property type="match status" value="1"/>
</dbReference>
<dbReference type="NCBIfam" id="NF011104">
    <property type="entry name" value="PRK14531.1"/>
    <property type="match status" value="1"/>
</dbReference>
<dbReference type="NCBIfam" id="NF011105">
    <property type="entry name" value="PRK14532.1"/>
    <property type="match status" value="1"/>
</dbReference>
<dbReference type="PANTHER" id="PTHR23359">
    <property type="entry name" value="NUCLEOTIDE KINASE"/>
    <property type="match status" value="1"/>
</dbReference>
<dbReference type="Pfam" id="PF00406">
    <property type="entry name" value="ADK"/>
    <property type="match status" value="1"/>
</dbReference>
<dbReference type="PRINTS" id="PR00094">
    <property type="entry name" value="ADENYLTKNASE"/>
</dbReference>
<dbReference type="SUPFAM" id="SSF52540">
    <property type="entry name" value="P-loop containing nucleoside triphosphate hydrolases"/>
    <property type="match status" value="1"/>
</dbReference>
<dbReference type="PROSITE" id="PS00113">
    <property type="entry name" value="ADENYLATE_KINASE"/>
    <property type="match status" value="1"/>
</dbReference>
<organism>
    <name type="scientific">Synechococcus sp. (strain RCC307)</name>
    <dbReference type="NCBI Taxonomy" id="316278"/>
    <lineage>
        <taxon>Bacteria</taxon>
        <taxon>Bacillati</taxon>
        <taxon>Cyanobacteriota</taxon>
        <taxon>Cyanophyceae</taxon>
        <taxon>Synechococcales</taxon>
        <taxon>Synechococcaceae</taxon>
        <taxon>Synechococcus</taxon>
    </lineage>
</organism>
<feature type="chain" id="PRO_1000058925" description="Adenylate kinase">
    <location>
        <begin position="1"/>
        <end position="182"/>
    </location>
</feature>
<feature type="region of interest" description="NMP" evidence="1">
    <location>
        <begin position="32"/>
        <end position="61"/>
    </location>
</feature>
<feature type="region of interest" description="LID" evidence="1">
    <location>
        <begin position="126"/>
        <end position="132"/>
    </location>
</feature>
<feature type="binding site" evidence="1">
    <location>
        <begin position="12"/>
        <end position="17"/>
    </location>
    <ligand>
        <name>ATP</name>
        <dbReference type="ChEBI" id="CHEBI:30616"/>
    </ligand>
</feature>
<feature type="binding site" evidence="1">
    <location>
        <position position="33"/>
    </location>
    <ligand>
        <name>AMP</name>
        <dbReference type="ChEBI" id="CHEBI:456215"/>
    </ligand>
</feature>
<feature type="binding site" evidence="1">
    <location>
        <position position="38"/>
    </location>
    <ligand>
        <name>AMP</name>
        <dbReference type="ChEBI" id="CHEBI:456215"/>
    </ligand>
</feature>
<feature type="binding site" evidence="1">
    <location>
        <begin position="59"/>
        <end position="61"/>
    </location>
    <ligand>
        <name>AMP</name>
        <dbReference type="ChEBI" id="CHEBI:456215"/>
    </ligand>
</feature>
<feature type="binding site" evidence="1">
    <location>
        <begin position="85"/>
        <end position="88"/>
    </location>
    <ligand>
        <name>AMP</name>
        <dbReference type="ChEBI" id="CHEBI:456215"/>
    </ligand>
</feature>
<feature type="binding site" evidence="1">
    <location>
        <position position="92"/>
    </location>
    <ligand>
        <name>AMP</name>
        <dbReference type="ChEBI" id="CHEBI:456215"/>
    </ligand>
</feature>
<feature type="binding site" evidence="1">
    <location>
        <position position="127"/>
    </location>
    <ligand>
        <name>ATP</name>
        <dbReference type="ChEBI" id="CHEBI:30616"/>
    </ligand>
</feature>
<feature type="binding site" evidence="1">
    <location>
        <position position="129"/>
    </location>
    <ligand>
        <name>AMP</name>
        <dbReference type="ChEBI" id="CHEBI:456215"/>
    </ligand>
</feature>
<feature type="binding site" evidence="1">
    <location>
        <position position="140"/>
    </location>
    <ligand>
        <name>AMP</name>
        <dbReference type="ChEBI" id="CHEBI:456215"/>
    </ligand>
</feature>
<feature type="binding site" evidence="1">
    <location>
        <position position="168"/>
    </location>
    <ligand>
        <name>ATP</name>
        <dbReference type="ChEBI" id="CHEBI:30616"/>
    </ligand>
</feature>
<accession>A5GVX9</accession>
<reference key="1">
    <citation type="submission" date="2006-05" db="EMBL/GenBank/DDBJ databases">
        <authorList>
            <consortium name="Genoscope"/>
        </authorList>
    </citation>
    <scope>NUCLEOTIDE SEQUENCE [LARGE SCALE GENOMIC DNA]</scope>
    <source>
        <strain>RCC307</strain>
    </source>
</reference>
<evidence type="ECO:0000255" key="1">
    <source>
        <dbReference type="HAMAP-Rule" id="MF_00235"/>
    </source>
</evidence>
<proteinExistence type="inferred from homology"/>
<gene>
    <name evidence="1" type="primary">adk</name>
    <name type="ordered locus">SynRCC307_2135</name>
</gene>
<name>KAD_SYNR3</name>
<protein>
    <recommendedName>
        <fullName evidence="1">Adenylate kinase</fullName>
        <shortName evidence="1">AK</shortName>
        <ecNumber evidence="1">2.7.4.3</ecNumber>
    </recommendedName>
    <alternativeName>
        <fullName evidence="1">ATP-AMP transphosphorylase</fullName>
    </alternativeName>
    <alternativeName>
        <fullName evidence="1">ATP:AMP phosphotransferase</fullName>
    </alternativeName>
    <alternativeName>
        <fullName evidence="1">Adenylate monophosphate kinase</fullName>
    </alternativeName>
</protein>
<comment type="function">
    <text evidence="1">Catalyzes the reversible transfer of the terminal phosphate group between ATP and AMP. Plays an important role in cellular energy homeostasis and in adenine nucleotide metabolism.</text>
</comment>
<comment type="catalytic activity">
    <reaction evidence="1">
        <text>AMP + ATP = 2 ADP</text>
        <dbReference type="Rhea" id="RHEA:12973"/>
        <dbReference type="ChEBI" id="CHEBI:30616"/>
        <dbReference type="ChEBI" id="CHEBI:456215"/>
        <dbReference type="ChEBI" id="CHEBI:456216"/>
        <dbReference type="EC" id="2.7.4.3"/>
    </reaction>
</comment>
<comment type="pathway">
    <text evidence="1">Purine metabolism; AMP biosynthesis via salvage pathway; AMP from ADP: step 1/1.</text>
</comment>
<comment type="subunit">
    <text evidence="1">Monomer.</text>
</comment>
<comment type="subcellular location">
    <subcellularLocation>
        <location evidence="1">Cytoplasm</location>
    </subcellularLocation>
</comment>
<comment type="domain">
    <text evidence="1">Consists of three domains, a large central CORE domain and two small peripheral domains, NMPbind and LID, which undergo movements during catalysis. The LID domain closes over the site of phosphoryl transfer upon ATP binding. Assembling and dissambling the active center during each catalytic cycle provides an effective means to prevent ATP hydrolysis.</text>
</comment>
<comment type="similarity">
    <text evidence="1">Belongs to the adenylate kinase family.</text>
</comment>
<keyword id="KW-0067">ATP-binding</keyword>
<keyword id="KW-0963">Cytoplasm</keyword>
<keyword id="KW-0418">Kinase</keyword>
<keyword id="KW-0545">Nucleotide biosynthesis</keyword>
<keyword id="KW-0547">Nucleotide-binding</keyword>
<keyword id="KW-1185">Reference proteome</keyword>
<keyword id="KW-0808">Transferase</keyword>